<proteinExistence type="inferred from homology"/>
<reference key="1">
    <citation type="journal article" date="2006" name="J. Bacteriol.">
        <title>Comparative genomic evidence for a close relationship between the dimorphic prosthecate bacteria Hyphomonas neptunium and Caulobacter crescentus.</title>
        <authorList>
            <person name="Badger J.H."/>
            <person name="Hoover T.R."/>
            <person name="Brun Y.V."/>
            <person name="Weiner R.M."/>
            <person name="Laub M.T."/>
            <person name="Alexandre G."/>
            <person name="Mrazek J."/>
            <person name="Ren Q."/>
            <person name="Paulsen I.T."/>
            <person name="Nelson K.E."/>
            <person name="Khouri H.M."/>
            <person name="Radune D."/>
            <person name="Sosa J."/>
            <person name="Dodson R.J."/>
            <person name="Sullivan S.A."/>
            <person name="Rosovitz M.J."/>
            <person name="Madupu R."/>
            <person name="Brinkac L.M."/>
            <person name="Durkin A.S."/>
            <person name="Daugherty S.C."/>
            <person name="Kothari S.P."/>
            <person name="Giglio M.G."/>
            <person name="Zhou L."/>
            <person name="Haft D.H."/>
            <person name="Selengut J.D."/>
            <person name="Davidsen T.M."/>
            <person name="Yang Q."/>
            <person name="Zafar N."/>
            <person name="Ward N.L."/>
        </authorList>
    </citation>
    <scope>NUCLEOTIDE SEQUENCE [LARGE SCALE GENOMIC DNA]</scope>
    <source>
        <strain>ATCC 15444</strain>
    </source>
</reference>
<comment type="function">
    <text evidence="1">ATP-dependent specificity component of the Clp protease. It directs the protease to specific substrates. Can perform chaperone functions in the absence of ClpP.</text>
</comment>
<comment type="subunit">
    <text evidence="1">Component of the ClpX-ClpP complex. Forms a hexameric ring that, in the presence of ATP, binds to fourteen ClpP subunits assembled into a disk-like structure with a central cavity, resembling the structure of eukaryotic proteasomes.</text>
</comment>
<comment type="similarity">
    <text evidence="1">Belongs to the ClpX chaperone family.</text>
</comment>
<evidence type="ECO:0000255" key="1">
    <source>
        <dbReference type="HAMAP-Rule" id="MF_00175"/>
    </source>
</evidence>
<evidence type="ECO:0000255" key="2">
    <source>
        <dbReference type="PROSITE-ProRule" id="PRU01250"/>
    </source>
</evidence>
<accession>Q0C0G0</accession>
<gene>
    <name evidence="1" type="primary">clpX</name>
    <name type="ordered locus">HNE_2086</name>
</gene>
<keyword id="KW-0067">ATP-binding</keyword>
<keyword id="KW-0143">Chaperone</keyword>
<keyword id="KW-0479">Metal-binding</keyword>
<keyword id="KW-0547">Nucleotide-binding</keyword>
<keyword id="KW-1185">Reference proteome</keyword>
<keyword id="KW-0862">Zinc</keyword>
<protein>
    <recommendedName>
        <fullName evidence="1">ATP-dependent Clp protease ATP-binding subunit ClpX</fullName>
    </recommendedName>
</protein>
<feature type="chain" id="PRO_1000058341" description="ATP-dependent Clp protease ATP-binding subunit ClpX">
    <location>
        <begin position="1"/>
        <end position="420"/>
    </location>
</feature>
<feature type="domain" description="ClpX-type ZB" evidence="2">
    <location>
        <begin position="4"/>
        <end position="57"/>
    </location>
</feature>
<feature type="binding site" evidence="2">
    <location>
        <position position="16"/>
    </location>
    <ligand>
        <name>Zn(2+)</name>
        <dbReference type="ChEBI" id="CHEBI:29105"/>
    </ligand>
</feature>
<feature type="binding site" evidence="2">
    <location>
        <position position="19"/>
    </location>
    <ligand>
        <name>Zn(2+)</name>
        <dbReference type="ChEBI" id="CHEBI:29105"/>
    </ligand>
</feature>
<feature type="binding site" evidence="2">
    <location>
        <position position="38"/>
    </location>
    <ligand>
        <name>Zn(2+)</name>
        <dbReference type="ChEBI" id="CHEBI:29105"/>
    </ligand>
</feature>
<feature type="binding site" evidence="2">
    <location>
        <position position="41"/>
    </location>
    <ligand>
        <name>Zn(2+)</name>
        <dbReference type="ChEBI" id="CHEBI:29105"/>
    </ligand>
</feature>
<feature type="binding site" evidence="1">
    <location>
        <begin position="120"/>
        <end position="127"/>
    </location>
    <ligand>
        <name>ATP</name>
        <dbReference type="ChEBI" id="CHEBI:30616"/>
    </ligand>
</feature>
<organism>
    <name type="scientific">Hyphomonas neptunium (strain ATCC 15444)</name>
    <dbReference type="NCBI Taxonomy" id="228405"/>
    <lineage>
        <taxon>Bacteria</taxon>
        <taxon>Pseudomonadati</taxon>
        <taxon>Pseudomonadota</taxon>
        <taxon>Alphaproteobacteria</taxon>
        <taxon>Hyphomonadales</taxon>
        <taxon>Hyphomonadaceae</taxon>
        <taxon>Hyphomonas</taxon>
    </lineage>
</organism>
<dbReference type="EMBL" id="CP000158">
    <property type="protein sequence ID" value="ABI77575.1"/>
    <property type="molecule type" value="Genomic_DNA"/>
</dbReference>
<dbReference type="RefSeq" id="WP_011647082.1">
    <property type="nucleotide sequence ID" value="NC_008358.1"/>
</dbReference>
<dbReference type="SMR" id="Q0C0G0"/>
<dbReference type="STRING" id="228405.HNE_2086"/>
<dbReference type="KEGG" id="hne:HNE_2086"/>
<dbReference type="eggNOG" id="COG1219">
    <property type="taxonomic scope" value="Bacteria"/>
</dbReference>
<dbReference type="HOGENOM" id="CLU_014218_8_2_5"/>
<dbReference type="Proteomes" id="UP000001959">
    <property type="component" value="Chromosome"/>
</dbReference>
<dbReference type="GO" id="GO:0009376">
    <property type="term" value="C:HslUV protease complex"/>
    <property type="evidence" value="ECO:0007669"/>
    <property type="project" value="TreeGrafter"/>
</dbReference>
<dbReference type="GO" id="GO:0005524">
    <property type="term" value="F:ATP binding"/>
    <property type="evidence" value="ECO:0007669"/>
    <property type="project" value="UniProtKB-UniRule"/>
</dbReference>
<dbReference type="GO" id="GO:0016887">
    <property type="term" value="F:ATP hydrolysis activity"/>
    <property type="evidence" value="ECO:0007669"/>
    <property type="project" value="InterPro"/>
</dbReference>
<dbReference type="GO" id="GO:0140662">
    <property type="term" value="F:ATP-dependent protein folding chaperone"/>
    <property type="evidence" value="ECO:0007669"/>
    <property type="project" value="InterPro"/>
</dbReference>
<dbReference type="GO" id="GO:0046983">
    <property type="term" value="F:protein dimerization activity"/>
    <property type="evidence" value="ECO:0007669"/>
    <property type="project" value="InterPro"/>
</dbReference>
<dbReference type="GO" id="GO:0051082">
    <property type="term" value="F:unfolded protein binding"/>
    <property type="evidence" value="ECO:0007669"/>
    <property type="project" value="UniProtKB-UniRule"/>
</dbReference>
<dbReference type="GO" id="GO:0008270">
    <property type="term" value="F:zinc ion binding"/>
    <property type="evidence" value="ECO:0007669"/>
    <property type="project" value="InterPro"/>
</dbReference>
<dbReference type="GO" id="GO:0051301">
    <property type="term" value="P:cell division"/>
    <property type="evidence" value="ECO:0007669"/>
    <property type="project" value="TreeGrafter"/>
</dbReference>
<dbReference type="GO" id="GO:0051603">
    <property type="term" value="P:proteolysis involved in protein catabolic process"/>
    <property type="evidence" value="ECO:0007669"/>
    <property type="project" value="TreeGrafter"/>
</dbReference>
<dbReference type="CDD" id="cd19497">
    <property type="entry name" value="RecA-like_ClpX"/>
    <property type="match status" value="1"/>
</dbReference>
<dbReference type="FunFam" id="1.10.8.60:FF:000002">
    <property type="entry name" value="ATP-dependent Clp protease ATP-binding subunit ClpX"/>
    <property type="match status" value="1"/>
</dbReference>
<dbReference type="FunFam" id="3.40.50.300:FF:000005">
    <property type="entry name" value="ATP-dependent Clp protease ATP-binding subunit ClpX"/>
    <property type="match status" value="1"/>
</dbReference>
<dbReference type="Gene3D" id="1.10.8.60">
    <property type="match status" value="1"/>
</dbReference>
<dbReference type="Gene3D" id="6.20.220.10">
    <property type="entry name" value="ClpX chaperone, C4-type zinc finger domain"/>
    <property type="match status" value="1"/>
</dbReference>
<dbReference type="Gene3D" id="3.40.50.300">
    <property type="entry name" value="P-loop containing nucleotide triphosphate hydrolases"/>
    <property type="match status" value="1"/>
</dbReference>
<dbReference type="HAMAP" id="MF_00175">
    <property type="entry name" value="ClpX"/>
    <property type="match status" value="1"/>
</dbReference>
<dbReference type="InterPro" id="IPR003593">
    <property type="entry name" value="AAA+_ATPase"/>
</dbReference>
<dbReference type="InterPro" id="IPR050052">
    <property type="entry name" value="ATP-dep_Clp_protease_ClpX"/>
</dbReference>
<dbReference type="InterPro" id="IPR003959">
    <property type="entry name" value="ATPase_AAA_core"/>
</dbReference>
<dbReference type="InterPro" id="IPR019489">
    <property type="entry name" value="Clp_ATPase_C"/>
</dbReference>
<dbReference type="InterPro" id="IPR004487">
    <property type="entry name" value="Clp_protease_ATP-bd_su_ClpX"/>
</dbReference>
<dbReference type="InterPro" id="IPR046425">
    <property type="entry name" value="ClpX_bact"/>
</dbReference>
<dbReference type="InterPro" id="IPR027417">
    <property type="entry name" value="P-loop_NTPase"/>
</dbReference>
<dbReference type="InterPro" id="IPR010603">
    <property type="entry name" value="Znf_CppX_C4"/>
</dbReference>
<dbReference type="InterPro" id="IPR038366">
    <property type="entry name" value="Znf_CppX_C4_sf"/>
</dbReference>
<dbReference type="NCBIfam" id="TIGR00382">
    <property type="entry name" value="clpX"/>
    <property type="match status" value="1"/>
</dbReference>
<dbReference type="NCBIfam" id="NF003745">
    <property type="entry name" value="PRK05342.1"/>
    <property type="match status" value="1"/>
</dbReference>
<dbReference type="PANTHER" id="PTHR48102:SF7">
    <property type="entry name" value="ATP-DEPENDENT CLP PROTEASE ATP-BINDING SUBUNIT CLPX-LIKE, MITOCHONDRIAL"/>
    <property type="match status" value="1"/>
</dbReference>
<dbReference type="PANTHER" id="PTHR48102">
    <property type="entry name" value="ATP-DEPENDENT CLP PROTEASE ATP-BINDING SUBUNIT CLPX-LIKE, MITOCHONDRIAL-RELATED"/>
    <property type="match status" value="1"/>
</dbReference>
<dbReference type="Pfam" id="PF07724">
    <property type="entry name" value="AAA_2"/>
    <property type="match status" value="1"/>
</dbReference>
<dbReference type="Pfam" id="PF10431">
    <property type="entry name" value="ClpB_D2-small"/>
    <property type="match status" value="1"/>
</dbReference>
<dbReference type="Pfam" id="PF06689">
    <property type="entry name" value="zf-C4_ClpX"/>
    <property type="match status" value="1"/>
</dbReference>
<dbReference type="SMART" id="SM00382">
    <property type="entry name" value="AAA"/>
    <property type="match status" value="1"/>
</dbReference>
<dbReference type="SMART" id="SM01086">
    <property type="entry name" value="ClpB_D2-small"/>
    <property type="match status" value="1"/>
</dbReference>
<dbReference type="SMART" id="SM00994">
    <property type="entry name" value="zf-C4_ClpX"/>
    <property type="match status" value="1"/>
</dbReference>
<dbReference type="SUPFAM" id="SSF57716">
    <property type="entry name" value="Glucocorticoid receptor-like (DNA-binding domain)"/>
    <property type="match status" value="1"/>
</dbReference>
<dbReference type="SUPFAM" id="SSF52540">
    <property type="entry name" value="P-loop containing nucleoside triphosphate hydrolases"/>
    <property type="match status" value="1"/>
</dbReference>
<dbReference type="PROSITE" id="PS51902">
    <property type="entry name" value="CLPX_ZB"/>
    <property type="match status" value="1"/>
</dbReference>
<sequence length="420" mass="45814">MTKPNGSGDSKNTLYCSFCGKSQHEVKKLIAGPTVFICDECVELCMDIIREENKTSAIKSRDGVPTPQEICDVLDDYVIGQRYAKRILSVAVHNHYKRLSHAGKTDGVELSKSNILLVGPTGCGKTLLAQTLARILDVPFTMADATTLTEAGYVGEDVENIVLKLLQSADYNVERAQRGIVYIDEIDKISRKSDNPSITRDVSGEGVQQALLKIMEGTVAAVPPQGGRKHPQQEFLQVDTTNILFICGGAFAGLEKIIAARGENASIGFGATIKSGEERGVGDTLREVEPEDLQKFGLIPEFIGRLPVLATLEDLDEKALIQILTQPKNALLKQYQRLFDMESVQLTFTPEALVAVARRAITRKTGARGLRSIMESILLDTMFELPNLRGVEEVVINAEVVDGNAEPLYVHASKSQTEAG</sequence>
<name>CLPX_HYPNA</name>